<feature type="chain" id="PRO_1000117853" description="Phosphoribosylaminoimidazole-succinocarboxamide synthase">
    <location>
        <begin position="1"/>
        <end position="367"/>
    </location>
</feature>
<reference key="1">
    <citation type="submission" date="2006-09" db="EMBL/GenBank/DDBJ databases">
        <title>Complete sequence of chromosome 1 of Shewanella sp. ANA-3.</title>
        <authorList>
            <person name="Copeland A."/>
            <person name="Lucas S."/>
            <person name="Lapidus A."/>
            <person name="Barry K."/>
            <person name="Detter J.C."/>
            <person name="Glavina del Rio T."/>
            <person name="Hammon N."/>
            <person name="Israni S."/>
            <person name="Dalin E."/>
            <person name="Tice H."/>
            <person name="Pitluck S."/>
            <person name="Chertkov O."/>
            <person name="Brettin T."/>
            <person name="Bruce D."/>
            <person name="Han C."/>
            <person name="Tapia R."/>
            <person name="Gilna P."/>
            <person name="Schmutz J."/>
            <person name="Larimer F."/>
            <person name="Land M."/>
            <person name="Hauser L."/>
            <person name="Kyrpides N."/>
            <person name="Kim E."/>
            <person name="Newman D."/>
            <person name="Salticov C."/>
            <person name="Konstantinidis K."/>
            <person name="Klappenback J."/>
            <person name="Tiedje J."/>
            <person name="Richardson P."/>
        </authorList>
    </citation>
    <scope>NUCLEOTIDE SEQUENCE [LARGE SCALE GENOMIC DNA]</scope>
    <source>
        <strain>ANA-3</strain>
    </source>
</reference>
<accession>A0L1C5</accession>
<organism>
    <name type="scientific">Shewanella sp. (strain ANA-3)</name>
    <dbReference type="NCBI Taxonomy" id="94122"/>
    <lineage>
        <taxon>Bacteria</taxon>
        <taxon>Pseudomonadati</taxon>
        <taxon>Pseudomonadota</taxon>
        <taxon>Gammaproteobacteria</taxon>
        <taxon>Alteromonadales</taxon>
        <taxon>Shewanellaceae</taxon>
        <taxon>Shewanella</taxon>
    </lineage>
</organism>
<comment type="catalytic activity">
    <reaction evidence="1">
        <text>5-amino-1-(5-phospho-D-ribosyl)imidazole-4-carboxylate + L-aspartate + ATP = (2S)-2-[5-amino-1-(5-phospho-beta-D-ribosyl)imidazole-4-carboxamido]succinate + ADP + phosphate + 2 H(+)</text>
        <dbReference type="Rhea" id="RHEA:22628"/>
        <dbReference type="ChEBI" id="CHEBI:15378"/>
        <dbReference type="ChEBI" id="CHEBI:29991"/>
        <dbReference type="ChEBI" id="CHEBI:30616"/>
        <dbReference type="ChEBI" id="CHEBI:43474"/>
        <dbReference type="ChEBI" id="CHEBI:58443"/>
        <dbReference type="ChEBI" id="CHEBI:77657"/>
        <dbReference type="ChEBI" id="CHEBI:456216"/>
        <dbReference type="EC" id="6.3.2.6"/>
    </reaction>
</comment>
<comment type="pathway">
    <text evidence="1">Purine metabolism; IMP biosynthesis via de novo pathway; 5-amino-1-(5-phospho-D-ribosyl)imidazole-4-carboxamide from 5-amino-1-(5-phospho-D-ribosyl)imidazole-4-carboxylate: step 1/2.</text>
</comment>
<comment type="similarity">
    <text evidence="1">Belongs to the SAICAR synthetase family.</text>
</comment>
<protein>
    <recommendedName>
        <fullName evidence="1">Phosphoribosylaminoimidazole-succinocarboxamide synthase</fullName>
        <ecNumber evidence="1">6.3.2.6</ecNumber>
    </recommendedName>
    <alternativeName>
        <fullName evidence="1">SAICAR synthetase</fullName>
    </alternativeName>
</protein>
<name>PUR7_SHESA</name>
<proteinExistence type="inferred from homology"/>
<keyword id="KW-0067">ATP-binding</keyword>
<keyword id="KW-0436">Ligase</keyword>
<keyword id="KW-0547">Nucleotide-binding</keyword>
<keyword id="KW-0658">Purine biosynthesis</keyword>
<dbReference type="EC" id="6.3.2.6" evidence="1"/>
<dbReference type="EMBL" id="CP000469">
    <property type="protein sequence ID" value="ABK49844.1"/>
    <property type="molecule type" value="Genomic_DNA"/>
</dbReference>
<dbReference type="RefSeq" id="WP_011718400.1">
    <property type="nucleotide sequence ID" value="NC_008577.1"/>
</dbReference>
<dbReference type="SMR" id="A0L1C5"/>
<dbReference type="STRING" id="94122.Shewana3_3622"/>
<dbReference type="KEGG" id="shn:Shewana3_3622"/>
<dbReference type="eggNOG" id="COG0152">
    <property type="taxonomic scope" value="Bacteria"/>
</dbReference>
<dbReference type="HOGENOM" id="CLU_064197_0_0_6"/>
<dbReference type="OrthoDB" id="9801549at2"/>
<dbReference type="UniPathway" id="UPA00074">
    <property type="reaction ID" value="UER00131"/>
</dbReference>
<dbReference type="Proteomes" id="UP000002589">
    <property type="component" value="Chromosome"/>
</dbReference>
<dbReference type="GO" id="GO:0005737">
    <property type="term" value="C:cytoplasm"/>
    <property type="evidence" value="ECO:0007669"/>
    <property type="project" value="TreeGrafter"/>
</dbReference>
<dbReference type="GO" id="GO:0005524">
    <property type="term" value="F:ATP binding"/>
    <property type="evidence" value="ECO:0007669"/>
    <property type="project" value="UniProtKB-KW"/>
</dbReference>
<dbReference type="GO" id="GO:0004639">
    <property type="term" value="F:phosphoribosylaminoimidazolesuccinocarboxamide synthase activity"/>
    <property type="evidence" value="ECO:0007669"/>
    <property type="project" value="UniProtKB-UniRule"/>
</dbReference>
<dbReference type="GO" id="GO:0006189">
    <property type="term" value="P:'de novo' IMP biosynthetic process"/>
    <property type="evidence" value="ECO:0007669"/>
    <property type="project" value="UniProtKB-UniRule"/>
</dbReference>
<dbReference type="CDD" id="cd01414">
    <property type="entry name" value="SAICAR_synt_Sc"/>
    <property type="match status" value="1"/>
</dbReference>
<dbReference type="FunFam" id="3.30.200.20:FF:000597">
    <property type="entry name" value="Phosphoribosylaminoimidazole-succinocarboxamide synthase"/>
    <property type="match status" value="1"/>
</dbReference>
<dbReference type="FunFam" id="3.30.470.20:FF:000067">
    <property type="entry name" value="Phosphoribosylaminoimidazole-succinocarboxamide synthase"/>
    <property type="match status" value="1"/>
</dbReference>
<dbReference type="Gene3D" id="3.30.470.20">
    <property type="entry name" value="ATP-grasp fold, B domain"/>
    <property type="match status" value="1"/>
</dbReference>
<dbReference type="Gene3D" id="3.30.200.20">
    <property type="entry name" value="Phosphorylase Kinase, domain 1"/>
    <property type="match status" value="1"/>
</dbReference>
<dbReference type="HAMAP" id="MF_00137">
    <property type="entry name" value="SAICAR_synth"/>
    <property type="match status" value="1"/>
</dbReference>
<dbReference type="InterPro" id="IPR028923">
    <property type="entry name" value="SAICAR_synt/ADE2_N"/>
</dbReference>
<dbReference type="InterPro" id="IPR014106">
    <property type="entry name" value="SAICAR_synthase_Vibrio-typ"/>
</dbReference>
<dbReference type="InterPro" id="IPR018236">
    <property type="entry name" value="SAICAR_synthetase_CS"/>
</dbReference>
<dbReference type="NCBIfam" id="NF010567">
    <property type="entry name" value="PRK13960.1"/>
    <property type="match status" value="1"/>
</dbReference>
<dbReference type="NCBIfam" id="TIGR02735">
    <property type="entry name" value="purC_vibrio"/>
    <property type="match status" value="1"/>
</dbReference>
<dbReference type="PANTHER" id="PTHR43700">
    <property type="entry name" value="PHOSPHORIBOSYLAMINOIMIDAZOLE-SUCCINOCARBOXAMIDE SYNTHASE"/>
    <property type="match status" value="1"/>
</dbReference>
<dbReference type="PANTHER" id="PTHR43700:SF1">
    <property type="entry name" value="PHOSPHORIBOSYLAMINOIMIDAZOLE-SUCCINOCARBOXAMIDE SYNTHASE"/>
    <property type="match status" value="1"/>
</dbReference>
<dbReference type="Pfam" id="PF01259">
    <property type="entry name" value="SAICAR_synt"/>
    <property type="match status" value="1"/>
</dbReference>
<dbReference type="SUPFAM" id="SSF56104">
    <property type="entry name" value="SAICAR synthase-like"/>
    <property type="match status" value="1"/>
</dbReference>
<dbReference type="PROSITE" id="PS01057">
    <property type="entry name" value="SAICAR_SYNTHETASE_1"/>
    <property type="match status" value="1"/>
</dbReference>
<sequence>MSLADSVLAVNNDLPIRTNSPVHSGKVRSVYWLTDADSRRLIQTKGYNVPEDTPLAIMVISDRISAFDCIFHGEGGLKGIPGKGAALNAISNHWFKLFAENGLADSHILDIPHPFVWIVQKARPIKVEAICRQYITGSMWRAYSKGERVFCGITLPEGLEKDQKLPDLLITPSTKGILTGIPGVPAQDDVNISRADIEANYQAFGFEKVEDIDLYEKLLKDGFKVISKALADLDQVFVDTKFEFGYVTDKNGNSKLIYMDEVGTPDSSRIWDGAAYRDGKILENSKEGFRQFLLNHFPDPDILLNKDRMPEREALARDNALPLEAMMNVSRTYTGIAEKVTGAAIPLPANPKADIIKILREEYDLIV</sequence>
<gene>
    <name evidence="1" type="primary">purC</name>
    <name type="ordered locus">Shewana3_3622</name>
</gene>
<evidence type="ECO:0000255" key="1">
    <source>
        <dbReference type="HAMAP-Rule" id="MF_00137"/>
    </source>
</evidence>